<name>BETI_BRUA4</name>
<proteinExistence type="inferred from homology"/>
<gene>
    <name evidence="2" type="primary">betI</name>
    <name type="ordered locus">Oant_2708</name>
</gene>
<protein>
    <recommendedName>
        <fullName evidence="2">HTH-type transcriptional regulator BetI</fullName>
    </recommendedName>
</protein>
<comment type="function">
    <text evidence="1">Repressor involved in the biosynthesis of the osmoprotectant glycine betaine. It represses transcription of the choline transporter BetT and the genes of BetAB involved in the synthesis of glycine betaine (By similarity).</text>
</comment>
<comment type="pathway">
    <text>Amine and polyamine biosynthesis; betaine biosynthesis via choline pathway [regulation].</text>
</comment>
<sequence>MPKIGMEPLRRRELIDAAIRTIGQRGSLDVTVAQIAHEAGVSPALAHHYFGGKDKLILATMRHLLRELGQDLNAAIGRTETPRERIAAIIAVNFSASQFAQETIAAWLTFYVHAQQSEDTRRLLRIYARRLHSNLVFALEQLTSRERASRIAEGAGAMIDGLYIRHALGADAPNAASAIALVEDYIAVQLMGEK</sequence>
<evidence type="ECO:0000250" key="1"/>
<evidence type="ECO:0000255" key="2">
    <source>
        <dbReference type="HAMAP-Rule" id="MF_00768"/>
    </source>
</evidence>
<dbReference type="EMBL" id="CP000758">
    <property type="protein sequence ID" value="ABS15420.1"/>
    <property type="molecule type" value="Genomic_DNA"/>
</dbReference>
<dbReference type="RefSeq" id="WP_012092476.1">
    <property type="nucleotide sequence ID" value="NC_009667.1"/>
</dbReference>
<dbReference type="SMR" id="A6X2G6"/>
<dbReference type="STRING" id="439375.Oant_2708"/>
<dbReference type="KEGG" id="oan:Oant_2708"/>
<dbReference type="eggNOG" id="COG1309">
    <property type="taxonomic scope" value="Bacteria"/>
</dbReference>
<dbReference type="HOGENOM" id="CLU_069356_15_4_5"/>
<dbReference type="PhylomeDB" id="A6X2G6"/>
<dbReference type="UniPathway" id="UPA00529"/>
<dbReference type="Proteomes" id="UP000002301">
    <property type="component" value="Chromosome 1"/>
</dbReference>
<dbReference type="GO" id="GO:0003700">
    <property type="term" value="F:DNA-binding transcription factor activity"/>
    <property type="evidence" value="ECO:0007669"/>
    <property type="project" value="UniProtKB-UniRule"/>
</dbReference>
<dbReference type="GO" id="GO:0000976">
    <property type="term" value="F:transcription cis-regulatory region binding"/>
    <property type="evidence" value="ECO:0007669"/>
    <property type="project" value="TreeGrafter"/>
</dbReference>
<dbReference type="GO" id="GO:0019285">
    <property type="term" value="P:glycine betaine biosynthetic process from choline"/>
    <property type="evidence" value="ECO:0007669"/>
    <property type="project" value="UniProtKB-UniRule"/>
</dbReference>
<dbReference type="GO" id="GO:0045892">
    <property type="term" value="P:negative regulation of DNA-templated transcription"/>
    <property type="evidence" value="ECO:0007669"/>
    <property type="project" value="UniProtKB-UniRule"/>
</dbReference>
<dbReference type="Gene3D" id="1.10.357.10">
    <property type="entry name" value="Tetracycline Repressor, domain 2"/>
    <property type="match status" value="1"/>
</dbReference>
<dbReference type="HAMAP" id="MF_00768">
    <property type="entry name" value="HTH_type_BetI"/>
    <property type="match status" value="1"/>
</dbReference>
<dbReference type="InterPro" id="IPR039538">
    <property type="entry name" value="BetI_C"/>
</dbReference>
<dbReference type="InterPro" id="IPR023772">
    <property type="entry name" value="DNA-bd_HTH_TetR-type_CS"/>
</dbReference>
<dbReference type="InterPro" id="IPR009057">
    <property type="entry name" value="Homeodomain-like_sf"/>
</dbReference>
<dbReference type="InterPro" id="IPR050109">
    <property type="entry name" value="HTH-type_TetR-like_transc_reg"/>
</dbReference>
<dbReference type="InterPro" id="IPR001647">
    <property type="entry name" value="HTH_TetR"/>
</dbReference>
<dbReference type="InterPro" id="IPR036271">
    <property type="entry name" value="Tet_transcr_reg_TetR-rel_C_sf"/>
</dbReference>
<dbReference type="InterPro" id="IPR017757">
    <property type="entry name" value="Tscrpt_rep_BetI"/>
</dbReference>
<dbReference type="NCBIfam" id="TIGR03384">
    <property type="entry name" value="betaine_BetI"/>
    <property type="match status" value="1"/>
</dbReference>
<dbReference type="NCBIfam" id="NF001978">
    <property type="entry name" value="PRK00767.1"/>
    <property type="match status" value="1"/>
</dbReference>
<dbReference type="PANTHER" id="PTHR30055:SF234">
    <property type="entry name" value="HTH-TYPE TRANSCRIPTIONAL REGULATOR BETI"/>
    <property type="match status" value="1"/>
</dbReference>
<dbReference type="PANTHER" id="PTHR30055">
    <property type="entry name" value="HTH-TYPE TRANSCRIPTIONAL REGULATOR RUTR"/>
    <property type="match status" value="1"/>
</dbReference>
<dbReference type="Pfam" id="PF13977">
    <property type="entry name" value="TetR_C_6"/>
    <property type="match status" value="1"/>
</dbReference>
<dbReference type="Pfam" id="PF00440">
    <property type="entry name" value="TetR_N"/>
    <property type="match status" value="1"/>
</dbReference>
<dbReference type="PRINTS" id="PR00455">
    <property type="entry name" value="HTHTETR"/>
</dbReference>
<dbReference type="SUPFAM" id="SSF46689">
    <property type="entry name" value="Homeodomain-like"/>
    <property type="match status" value="1"/>
</dbReference>
<dbReference type="SUPFAM" id="SSF48498">
    <property type="entry name" value="Tetracyclin repressor-like, C-terminal domain"/>
    <property type="match status" value="1"/>
</dbReference>
<dbReference type="PROSITE" id="PS01081">
    <property type="entry name" value="HTH_TETR_1"/>
    <property type="match status" value="1"/>
</dbReference>
<dbReference type="PROSITE" id="PS50977">
    <property type="entry name" value="HTH_TETR_2"/>
    <property type="match status" value="1"/>
</dbReference>
<organism>
    <name type="scientific">Brucella anthropi (strain ATCC 49188 / DSM 6882 / CCUG 24695 / JCM 21032 / LMG 3331 / NBRC 15819 / NCTC 12168 / Alc 37)</name>
    <name type="common">Ochrobactrum anthropi</name>
    <dbReference type="NCBI Taxonomy" id="439375"/>
    <lineage>
        <taxon>Bacteria</taxon>
        <taxon>Pseudomonadati</taxon>
        <taxon>Pseudomonadota</taxon>
        <taxon>Alphaproteobacteria</taxon>
        <taxon>Hyphomicrobiales</taxon>
        <taxon>Brucellaceae</taxon>
        <taxon>Brucella/Ochrobactrum group</taxon>
        <taxon>Brucella</taxon>
    </lineage>
</organism>
<keyword id="KW-0238">DNA-binding</keyword>
<keyword id="KW-1185">Reference proteome</keyword>
<keyword id="KW-0678">Repressor</keyword>
<keyword id="KW-0804">Transcription</keyword>
<keyword id="KW-0805">Transcription regulation</keyword>
<reference key="1">
    <citation type="journal article" date="2011" name="J. Bacteriol.">
        <title>Genome of Ochrobactrum anthropi ATCC 49188 T, a versatile opportunistic pathogen and symbiont of several eukaryotic hosts.</title>
        <authorList>
            <person name="Chain P.S."/>
            <person name="Lang D.M."/>
            <person name="Comerci D.J."/>
            <person name="Malfatti S.A."/>
            <person name="Vergez L.M."/>
            <person name="Shin M."/>
            <person name="Ugalde R.A."/>
            <person name="Garcia E."/>
            <person name="Tolmasky M.E."/>
        </authorList>
    </citation>
    <scope>NUCLEOTIDE SEQUENCE [LARGE SCALE GENOMIC DNA]</scope>
    <source>
        <strain>ATCC 49188 / DSM 6882 / CCUG 24695 / JCM 21032 / LMG 3331 / NBRC 15819 / NCTC 12168 / Alc 37</strain>
    </source>
</reference>
<feature type="chain" id="PRO_1000083564" description="HTH-type transcriptional regulator BetI">
    <location>
        <begin position="1"/>
        <end position="194"/>
    </location>
</feature>
<feature type="domain" description="HTH tetR-type" evidence="2">
    <location>
        <begin position="8"/>
        <end position="68"/>
    </location>
</feature>
<feature type="DNA-binding region" description="H-T-H motif" evidence="2">
    <location>
        <begin position="31"/>
        <end position="50"/>
    </location>
</feature>
<accession>A6X2G6</accession>